<organism>
    <name type="scientific">Haemophilus influenzae (strain ATCC 51907 / DSM 11121 / KW20 / Rd)</name>
    <dbReference type="NCBI Taxonomy" id="71421"/>
    <lineage>
        <taxon>Bacteria</taxon>
        <taxon>Pseudomonadati</taxon>
        <taxon>Pseudomonadota</taxon>
        <taxon>Gammaproteobacteria</taxon>
        <taxon>Pasteurellales</taxon>
        <taxon>Pasteurellaceae</taxon>
        <taxon>Haemophilus</taxon>
    </lineage>
</organism>
<keyword id="KW-0131">Cell cycle</keyword>
<keyword id="KW-0132">Cell division</keyword>
<keyword id="KW-0997">Cell inner membrane</keyword>
<keyword id="KW-1003">Cell membrane</keyword>
<keyword id="KW-0472">Membrane</keyword>
<keyword id="KW-1185">Reference proteome</keyword>
<keyword id="KW-0812">Transmembrane</keyword>
<keyword id="KW-1133">Transmembrane helix</keyword>
<evidence type="ECO:0000250" key="1"/>
<evidence type="ECO:0000255" key="2"/>
<evidence type="ECO:0000305" key="3"/>
<accession>P44872</accession>
<feature type="chain" id="PRO_0000166794" description="Cell division protein FtsX">
    <location>
        <begin position="1"/>
        <end position="310"/>
    </location>
</feature>
<feature type="topological domain" description="Cytoplasmic" evidence="2">
    <location>
        <begin position="1"/>
        <end position="31"/>
    </location>
</feature>
<feature type="transmembrane region" description="Helical" evidence="2">
    <location>
        <begin position="32"/>
        <end position="52"/>
    </location>
</feature>
<feature type="topological domain" description="Periplasmic" evidence="2">
    <location>
        <begin position="53"/>
        <end position="176"/>
    </location>
</feature>
<feature type="transmembrane region" description="Helical" evidence="2">
    <location>
        <begin position="177"/>
        <end position="197"/>
    </location>
</feature>
<feature type="topological domain" description="Cytoplasmic" evidence="2">
    <location>
        <begin position="198"/>
        <end position="234"/>
    </location>
</feature>
<feature type="transmembrane region" description="Helical" evidence="2">
    <location>
        <begin position="235"/>
        <end position="255"/>
    </location>
</feature>
<feature type="topological domain" description="Periplasmic" evidence="2">
    <location>
        <begin position="256"/>
        <end position="279"/>
    </location>
</feature>
<feature type="transmembrane region" description="Helical" evidence="2">
    <location>
        <begin position="280"/>
        <end position="300"/>
    </location>
</feature>
<feature type="topological domain" description="Cytoplasmic" evidence="2">
    <location>
        <begin position="301"/>
        <end position="310"/>
    </location>
</feature>
<protein>
    <recommendedName>
        <fullName>Cell division protein FtsX</fullName>
    </recommendedName>
</protein>
<comment type="function">
    <text evidence="1">Part of the ABC transporter FtsEX involved in cellular division.</text>
</comment>
<comment type="subunit">
    <text evidence="1">Forms a membrane-associated complex with FtsE.</text>
</comment>
<comment type="subcellular location">
    <subcellularLocation>
        <location evidence="1">Cell inner membrane</location>
        <topology evidence="1">Multi-pass membrane protein</topology>
    </subcellularLocation>
</comment>
<comment type="similarity">
    <text evidence="3">Belongs to the ABC-4 integral membrane protein family. FtsX subfamily.</text>
</comment>
<proteinExistence type="inferred from homology"/>
<sequence length="310" mass="35033">MSRSTDASVFVQTAYTLRAVWADLWQRKFGTLLTILVIAVSLTIPTVSYLMWKNLHLATTQFYPESELTIYLHKNLSEENANLVVEKIRQQKGVESLNYVSRQESLKEFKSWSGFGEELEILDDNPLPAVVIVKPTSEFNVSEKRDELRTNLNKIKGVQEVRLDNDWMEKLTALSWLIAHVAIFCTVLMTIAVFLVIGNSIRSDVYSSRSSIDVMKLLGATDQFILRPYLYTGMIYALLGGLVAAIFSSFIISYFTSAVKYVTDIFAVQFSLNGLGVGEFVFLLVCCLIMGYVGAWIAATRHIAMMERKE</sequence>
<gene>
    <name type="primary">ftsX</name>
    <name type="ordered locus">HI_0770</name>
</gene>
<dbReference type="EMBL" id="L42023">
    <property type="protein sequence ID" value="AAC22428.1"/>
    <property type="molecule type" value="Genomic_DNA"/>
</dbReference>
<dbReference type="PIR" id="I64091">
    <property type="entry name" value="I64091"/>
</dbReference>
<dbReference type="RefSeq" id="NP_438929.1">
    <property type="nucleotide sequence ID" value="NC_000907.1"/>
</dbReference>
<dbReference type="SMR" id="P44872"/>
<dbReference type="STRING" id="71421.HI_0770"/>
<dbReference type="EnsemblBacteria" id="AAC22428">
    <property type="protein sequence ID" value="AAC22428"/>
    <property type="gene ID" value="HI_0770"/>
</dbReference>
<dbReference type="KEGG" id="hin:HI_0770"/>
<dbReference type="PATRIC" id="fig|71421.8.peg.809"/>
<dbReference type="eggNOG" id="COG2177">
    <property type="taxonomic scope" value="Bacteria"/>
</dbReference>
<dbReference type="HOGENOM" id="CLU_073546_0_0_6"/>
<dbReference type="OrthoDB" id="9813411at2"/>
<dbReference type="PhylomeDB" id="P44872"/>
<dbReference type="BioCyc" id="HINF71421:G1GJ1-810-MONOMER"/>
<dbReference type="Proteomes" id="UP000000579">
    <property type="component" value="Chromosome"/>
</dbReference>
<dbReference type="GO" id="GO:0032153">
    <property type="term" value="C:cell division site"/>
    <property type="evidence" value="ECO:0000318"/>
    <property type="project" value="GO_Central"/>
</dbReference>
<dbReference type="GO" id="GO:0009276">
    <property type="term" value="C:Gram-negative-bacterium-type cell wall"/>
    <property type="evidence" value="ECO:0000250"/>
    <property type="project" value="UniProtKB"/>
</dbReference>
<dbReference type="GO" id="GO:0016020">
    <property type="term" value="C:membrane"/>
    <property type="evidence" value="ECO:0000318"/>
    <property type="project" value="GO_Central"/>
</dbReference>
<dbReference type="GO" id="GO:0005886">
    <property type="term" value="C:plasma membrane"/>
    <property type="evidence" value="ECO:0007669"/>
    <property type="project" value="UniProtKB-SubCell"/>
</dbReference>
<dbReference type="GO" id="GO:0051301">
    <property type="term" value="P:cell division"/>
    <property type="evidence" value="ECO:0000250"/>
    <property type="project" value="UniProtKB"/>
</dbReference>
<dbReference type="FunFam" id="3.30.70.3040:FF:000001">
    <property type="entry name" value="Cell division protein FtsX"/>
    <property type="match status" value="1"/>
</dbReference>
<dbReference type="Gene3D" id="3.30.70.3040">
    <property type="match status" value="1"/>
</dbReference>
<dbReference type="InterPro" id="IPR003838">
    <property type="entry name" value="ABC3_permease_C"/>
</dbReference>
<dbReference type="InterPro" id="IPR004513">
    <property type="entry name" value="FtsX"/>
</dbReference>
<dbReference type="InterPro" id="IPR040690">
    <property type="entry name" value="FtsX_ECD"/>
</dbReference>
<dbReference type="InterPro" id="IPR047590">
    <property type="entry name" value="FtsX_proteobact"/>
</dbReference>
<dbReference type="NCBIfam" id="TIGR00439">
    <property type="entry name" value="FtsX_Gneg"/>
    <property type="match status" value="1"/>
</dbReference>
<dbReference type="PANTHER" id="PTHR47755">
    <property type="entry name" value="CELL DIVISION PROTEIN FTSX"/>
    <property type="match status" value="1"/>
</dbReference>
<dbReference type="PANTHER" id="PTHR47755:SF1">
    <property type="entry name" value="CELL DIVISION PROTEIN FTSX"/>
    <property type="match status" value="1"/>
</dbReference>
<dbReference type="Pfam" id="PF02687">
    <property type="entry name" value="FtsX"/>
    <property type="match status" value="1"/>
</dbReference>
<dbReference type="Pfam" id="PF18075">
    <property type="entry name" value="FtsX_ECD"/>
    <property type="match status" value="1"/>
</dbReference>
<dbReference type="PIRSF" id="PIRSF003097">
    <property type="entry name" value="FtsX"/>
    <property type="match status" value="1"/>
</dbReference>
<name>FTSX_HAEIN</name>
<reference key="1">
    <citation type="journal article" date="1995" name="Science">
        <title>Whole-genome random sequencing and assembly of Haemophilus influenzae Rd.</title>
        <authorList>
            <person name="Fleischmann R.D."/>
            <person name="Adams M.D."/>
            <person name="White O."/>
            <person name="Clayton R.A."/>
            <person name="Kirkness E.F."/>
            <person name="Kerlavage A.R."/>
            <person name="Bult C.J."/>
            <person name="Tomb J.-F."/>
            <person name="Dougherty B.A."/>
            <person name="Merrick J.M."/>
            <person name="McKenney K."/>
            <person name="Sutton G.G."/>
            <person name="FitzHugh W."/>
            <person name="Fields C.A."/>
            <person name="Gocayne J.D."/>
            <person name="Scott J.D."/>
            <person name="Shirley R."/>
            <person name="Liu L.-I."/>
            <person name="Glodek A."/>
            <person name="Kelley J.M."/>
            <person name="Weidman J.F."/>
            <person name="Phillips C.A."/>
            <person name="Spriggs T."/>
            <person name="Hedblom E."/>
            <person name="Cotton M.D."/>
            <person name="Utterback T.R."/>
            <person name="Hanna M.C."/>
            <person name="Nguyen D.T."/>
            <person name="Saudek D.M."/>
            <person name="Brandon R.C."/>
            <person name="Fine L.D."/>
            <person name="Fritchman J.L."/>
            <person name="Fuhrmann J.L."/>
            <person name="Geoghagen N.S.M."/>
            <person name="Gnehm C.L."/>
            <person name="McDonald L.A."/>
            <person name="Small K.V."/>
            <person name="Fraser C.M."/>
            <person name="Smith H.O."/>
            <person name="Venter J.C."/>
        </authorList>
    </citation>
    <scope>NUCLEOTIDE SEQUENCE [LARGE SCALE GENOMIC DNA]</scope>
    <source>
        <strain>ATCC 51907 / DSM 11121 / KW20 / Rd</strain>
    </source>
</reference>